<organism>
    <name type="scientific">Staphylococcus aureus (strain NCTC 8325 / PS 47)</name>
    <dbReference type="NCBI Taxonomy" id="93061"/>
    <lineage>
        <taxon>Bacteria</taxon>
        <taxon>Bacillati</taxon>
        <taxon>Bacillota</taxon>
        <taxon>Bacilli</taxon>
        <taxon>Bacillales</taxon>
        <taxon>Staphylococcaceae</taxon>
        <taxon>Staphylococcus</taxon>
    </lineage>
</organism>
<name>RNM5_STAA8</name>
<keyword id="KW-0963">Cytoplasm</keyword>
<keyword id="KW-0255">Endonuclease</keyword>
<keyword id="KW-0378">Hydrolase</keyword>
<keyword id="KW-0460">Magnesium</keyword>
<keyword id="KW-0479">Metal-binding</keyword>
<keyword id="KW-0540">Nuclease</keyword>
<keyword id="KW-1185">Reference proteome</keyword>
<keyword id="KW-0690">Ribosome biogenesis</keyword>
<keyword id="KW-0694">RNA-binding</keyword>
<keyword id="KW-0698">rRNA processing</keyword>
<keyword id="KW-0699">rRNA-binding</keyword>
<gene>
    <name evidence="1" type="primary">rnmV</name>
    <name type="ordered locus">SAOUHSC_00463</name>
</gene>
<accession>Q2G0T1</accession>
<protein>
    <recommendedName>
        <fullName evidence="1">Ribonuclease M5</fullName>
        <ecNumber evidence="1">3.1.26.8</ecNumber>
    </recommendedName>
    <alternativeName>
        <fullName evidence="1">RNase M5</fullName>
    </alternativeName>
    <alternativeName>
        <fullName evidence="1">Ribosomal RNA terminal maturase M5</fullName>
    </alternativeName>
</protein>
<proteinExistence type="inferred from homology"/>
<feature type="chain" id="PRO_0000416757" description="Ribonuclease M5">
    <location>
        <begin position="1"/>
        <end position="178"/>
    </location>
</feature>
<feature type="domain" description="Toprim" evidence="1">
    <location>
        <begin position="4"/>
        <end position="100"/>
    </location>
</feature>
<feature type="binding site" evidence="1">
    <location>
        <position position="10"/>
    </location>
    <ligand>
        <name>Mg(2+)</name>
        <dbReference type="ChEBI" id="CHEBI:18420"/>
        <label>1</label>
        <note>catalytic</note>
    </ligand>
</feature>
<feature type="binding site" evidence="1">
    <location>
        <position position="56"/>
    </location>
    <ligand>
        <name>Mg(2+)</name>
        <dbReference type="ChEBI" id="CHEBI:18420"/>
        <label>1</label>
        <note>catalytic</note>
    </ligand>
</feature>
<feature type="binding site" evidence="1">
    <location>
        <position position="56"/>
    </location>
    <ligand>
        <name>Mg(2+)</name>
        <dbReference type="ChEBI" id="CHEBI:18420"/>
        <label>2</label>
    </ligand>
</feature>
<feature type="binding site" evidence="1">
    <location>
        <position position="58"/>
    </location>
    <ligand>
        <name>Mg(2+)</name>
        <dbReference type="ChEBI" id="CHEBI:18420"/>
        <label>2</label>
    </ligand>
</feature>
<sequence>MKINEFIVVEGRDDTERVKRAVECDTIETNGSAINEQTLEVIRNAQQSRGVIVLTDPDFPGDKIRSTITEHVKGVKHAYIDREKAKNKKGKIGVEHADLIDIKEALMHVSSPFDEAYESIDKSVLIELGLIVGKDARRRREILSRKLRIGHSNGKQLLKKLNAFGYTEADVRQALEDE</sequence>
<evidence type="ECO:0000255" key="1">
    <source>
        <dbReference type="HAMAP-Rule" id="MF_01469"/>
    </source>
</evidence>
<reference key="1">
    <citation type="book" date="2006" name="Gram positive pathogens, 2nd edition">
        <title>The Staphylococcus aureus NCTC 8325 genome.</title>
        <editorList>
            <person name="Fischetti V."/>
            <person name="Novick R."/>
            <person name="Ferretti J."/>
            <person name="Portnoy D."/>
            <person name="Rood J."/>
        </editorList>
        <authorList>
            <person name="Gillaspy A.F."/>
            <person name="Worrell V."/>
            <person name="Orvis J."/>
            <person name="Roe B.A."/>
            <person name="Dyer D.W."/>
            <person name="Iandolo J.J."/>
        </authorList>
    </citation>
    <scope>NUCLEOTIDE SEQUENCE [LARGE SCALE GENOMIC DNA]</scope>
    <source>
        <strain>NCTC 8325 / PS 47</strain>
    </source>
</reference>
<dbReference type="EC" id="3.1.26.8" evidence="1"/>
<dbReference type="EMBL" id="CP000253">
    <property type="protein sequence ID" value="ABD29618.1"/>
    <property type="molecule type" value="Genomic_DNA"/>
</dbReference>
<dbReference type="RefSeq" id="WP_000700080.1">
    <property type="nucleotide sequence ID" value="NZ_LS483365.1"/>
</dbReference>
<dbReference type="RefSeq" id="YP_499042.1">
    <property type="nucleotide sequence ID" value="NC_007795.1"/>
</dbReference>
<dbReference type="SMR" id="Q2G0T1"/>
<dbReference type="STRING" id="93061.SAOUHSC_00463"/>
<dbReference type="PaxDb" id="1280-SAXN108_0543"/>
<dbReference type="GeneID" id="3920323"/>
<dbReference type="KEGG" id="sao:SAOUHSC_00463"/>
<dbReference type="PATRIC" id="fig|93061.5.peg.418"/>
<dbReference type="eggNOG" id="COG1658">
    <property type="taxonomic scope" value="Bacteria"/>
</dbReference>
<dbReference type="HOGENOM" id="CLU_109405_0_0_9"/>
<dbReference type="OrthoDB" id="9791329at2"/>
<dbReference type="PRO" id="PR:Q2G0T1"/>
<dbReference type="Proteomes" id="UP000008816">
    <property type="component" value="Chromosome"/>
</dbReference>
<dbReference type="GO" id="GO:0005737">
    <property type="term" value="C:cytoplasm"/>
    <property type="evidence" value="ECO:0007669"/>
    <property type="project" value="UniProtKB-SubCell"/>
</dbReference>
<dbReference type="GO" id="GO:0046872">
    <property type="term" value="F:metal ion binding"/>
    <property type="evidence" value="ECO:0007669"/>
    <property type="project" value="UniProtKB-KW"/>
</dbReference>
<dbReference type="GO" id="GO:0043822">
    <property type="term" value="F:ribonuclease M5 activity"/>
    <property type="evidence" value="ECO:0000318"/>
    <property type="project" value="GO_Central"/>
</dbReference>
<dbReference type="GO" id="GO:0019843">
    <property type="term" value="F:rRNA binding"/>
    <property type="evidence" value="ECO:0007669"/>
    <property type="project" value="UniProtKB-KW"/>
</dbReference>
<dbReference type="GO" id="GO:0006364">
    <property type="term" value="P:rRNA processing"/>
    <property type="evidence" value="ECO:0000318"/>
    <property type="project" value="GO_Central"/>
</dbReference>
<dbReference type="CDD" id="cd01027">
    <property type="entry name" value="TOPRIM_RNase_M5_like"/>
    <property type="match status" value="1"/>
</dbReference>
<dbReference type="FunFam" id="3.40.1360.10:FF:000006">
    <property type="entry name" value="Ribonuclease M5"/>
    <property type="match status" value="1"/>
</dbReference>
<dbReference type="Gene3D" id="3.40.1360.10">
    <property type="match status" value="1"/>
</dbReference>
<dbReference type="HAMAP" id="MF_01469">
    <property type="entry name" value="RNase_M5"/>
    <property type="match status" value="1"/>
</dbReference>
<dbReference type="InterPro" id="IPR004466">
    <property type="entry name" value="RNase_M5"/>
</dbReference>
<dbReference type="InterPro" id="IPR025156">
    <property type="entry name" value="RNase_M5_C"/>
</dbReference>
<dbReference type="InterPro" id="IPR006171">
    <property type="entry name" value="TOPRIM_dom"/>
</dbReference>
<dbReference type="InterPro" id="IPR034141">
    <property type="entry name" value="TOPRIM_RNase_M5-like"/>
</dbReference>
<dbReference type="NCBIfam" id="TIGR00334">
    <property type="entry name" value="5S_RNA_mat_M5"/>
    <property type="match status" value="1"/>
</dbReference>
<dbReference type="PANTHER" id="PTHR39156">
    <property type="entry name" value="RIBONUCLEASE M5"/>
    <property type="match status" value="1"/>
</dbReference>
<dbReference type="PANTHER" id="PTHR39156:SF1">
    <property type="entry name" value="RIBONUCLEASE M5"/>
    <property type="match status" value="1"/>
</dbReference>
<dbReference type="Pfam" id="PF13331">
    <property type="entry name" value="DUF4093"/>
    <property type="match status" value="1"/>
</dbReference>
<dbReference type="Pfam" id="PF01751">
    <property type="entry name" value="Toprim"/>
    <property type="match status" value="1"/>
</dbReference>
<dbReference type="SMART" id="SM00493">
    <property type="entry name" value="TOPRIM"/>
    <property type="match status" value="1"/>
</dbReference>
<dbReference type="SUPFAM" id="SSF110455">
    <property type="entry name" value="Toprim domain"/>
    <property type="match status" value="1"/>
</dbReference>
<dbReference type="PROSITE" id="PS50880">
    <property type="entry name" value="TOPRIM"/>
    <property type="match status" value="1"/>
</dbReference>
<comment type="function">
    <text evidence="1">Required for correct processing of both the 5' and 3' ends of 5S rRNA precursor. Cleaves both sides of a double-stranded region yielding mature 5S rRNA in one step.</text>
</comment>
<comment type="catalytic activity">
    <reaction evidence="1">
        <text>Endonucleolytic cleavage of RNA, removing 21 and 42 nucleotides, respectively, from the 5'- and 3'-termini of a 5S-rRNA precursor.</text>
        <dbReference type="EC" id="3.1.26.8"/>
    </reaction>
</comment>
<comment type="cofactor">
    <cofactor evidence="1">
        <name>Mg(2+)</name>
        <dbReference type="ChEBI" id="CHEBI:18420"/>
    </cofactor>
    <text evidence="1">Binds two Mg(2+) per subunit.</text>
</comment>
<comment type="subcellular location">
    <subcellularLocation>
        <location evidence="1">Cytoplasm</location>
    </subcellularLocation>
</comment>
<comment type="similarity">
    <text evidence="1">Belongs to the ribonuclease M5 family.</text>
</comment>